<sequence>MISPVLKKYARPSLWYRFCAWVASKKNRLYVGWFGVLMIPTLLTAATVFIIAFIAAPPVDIDGIREPVSGSLFYGNNIITGAVVPTSNAIGLHFYPIWEATSLDEWLYNGGPYQLIVCHFFIGICSYMGREWELSFRLGMRPWIAVAYSAPVAAASAVFIVYPLGQGSFSDGMPLGISGTFNFMIVFQAEHNILMHPFHMLGVAGVFGGSLFSAMHGSLVTSSLLRETTENESINVGYKFGQEEETYNIIAAHAYFGRLIFQYASFNNSRSLHFFLAVWPVVGIWFTALGVSTMAFNLNGFNFNQSVIDSQGRVINTWADIINRANLGMEVMHERNAHNFPLDLA</sequence>
<organism>
    <name type="scientific">Euglena gracilis</name>
    <dbReference type="NCBI Taxonomy" id="3039"/>
    <lineage>
        <taxon>Eukaryota</taxon>
        <taxon>Discoba</taxon>
        <taxon>Euglenozoa</taxon>
        <taxon>Euglenida</taxon>
        <taxon>Spirocuta</taxon>
        <taxon>Euglenophyceae</taxon>
        <taxon>Euglenales</taxon>
        <taxon>Euglenaceae</taxon>
        <taxon>Euglena</taxon>
    </lineage>
</organism>
<gene>
    <name evidence="1" type="primary">psbA</name>
</gene>
<reference key="1">
    <citation type="journal article" date="1984" name="FEBS Lett.">
        <title>Structure of the Euglena gracilis chloroplast gene (psbA) coding for the 32-kDa protein of Photosystem II.</title>
        <authorList>
            <person name="Keller M."/>
            <person name="Stutz E."/>
        </authorList>
    </citation>
    <scope>NUCLEOTIDE SEQUENCE [GENOMIC DNA]</scope>
</reference>
<reference key="2">
    <citation type="journal article" date="1984" name="Nucleic Acids Res.">
        <title>Chloroplast gene for Mr 32000 polypeptide of photosystem II in Euglena gracilis is interrupted by four introns with conserved boundary sequences.</title>
        <authorList>
            <person name="Karabin G.D."/>
            <person name="Farley M.A."/>
            <person name="Hallick R.B."/>
        </authorList>
    </citation>
    <scope>NUCLEOTIDE SEQUENCE [GENOMIC DNA]</scope>
</reference>
<reference key="3">
    <citation type="journal article" date="1993" name="Nucleic Acids Res.">
        <title>Complete sequence of Euglena gracilis chloroplast DNA.</title>
        <authorList>
            <person name="Hallick R.B."/>
            <person name="Hong L."/>
            <person name="Drager R.G."/>
            <person name="Favreau M.R."/>
            <person name="Monfort A."/>
            <person name="Orsat B."/>
            <person name="Spielmann A."/>
            <person name="Stutz E."/>
        </authorList>
    </citation>
    <scope>NUCLEOTIDE SEQUENCE [LARGE SCALE GENOMIC DNA]</scope>
    <source>
        <strain>Z / UTEX 753</strain>
    </source>
</reference>
<reference key="4">
    <citation type="journal article" date="1987" name="Curr. Genet.">
        <title>The psbA gene of DCMU-resistant Euglena gracilis has an amino acid substitution at serine codon 265.</title>
        <authorList>
            <person name="Johanningmeier U."/>
            <person name="Hallick R.B."/>
        </authorList>
    </citation>
    <scope>MUTAGENESIS OF SER-265</scope>
</reference>
<accession>P06631</accession>
<comment type="function">
    <text evidence="1">Photosystem II (PSII) is a light-driven water:plastoquinone oxidoreductase that uses light energy to abstract electrons from H(2)O, generating O(2) and a proton gradient subsequently used for ATP formation. It consists of a core antenna complex that captures photons, and an electron transfer chain that converts photonic excitation into a charge separation. The D1/D2 (PsbA/PsbD) reaction center heterodimer binds P680, the primary electron donor of PSII as well as several subsequent electron acceptors.</text>
</comment>
<comment type="catalytic activity">
    <reaction evidence="1">
        <text>2 a plastoquinone + 4 hnu + 2 H2O = 2 a plastoquinol + O2</text>
        <dbReference type="Rhea" id="RHEA:36359"/>
        <dbReference type="Rhea" id="RHEA-COMP:9561"/>
        <dbReference type="Rhea" id="RHEA-COMP:9562"/>
        <dbReference type="ChEBI" id="CHEBI:15377"/>
        <dbReference type="ChEBI" id="CHEBI:15379"/>
        <dbReference type="ChEBI" id="CHEBI:17757"/>
        <dbReference type="ChEBI" id="CHEBI:30212"/>
        <dbReference type="ChEBI" id="CHEBI:62192"/>
        <dbReference type="EC" id="1.10.3.9"/>
    </reaction>
</comment>
<comment type="cofactor">
    <text evidence="1">The D1/D2 heterodimer binds P680, chlorophylls that are the primary electron donor of PSII, and subsequent electron acceptors. It shares a non-heme iron and each subunit binds pheophytin, quinone, additional chlorophylls, carotenoids and lipids. D1 provides most of the ligands for the Mn4-Ca-O5 cluster of the oxygen-evolving complex (OEC). There is also a Cl(-1) ion associated with D1 and D2, which is required for oxygen evolution. The PSII complex binds additional chlorophylls, carotenoids and specific lipids.</text>
</comment>
<comment type="subunit">
    <text evidence="4">PSII is composed of 1 copy each of membrane proteins PsbA, PsbB, PsbC, PsbD, PsbE, PsbF, PsbH, PsbI, PsbJ, PsbK, PsbL, PsbM, PsbT, PsbY, PsbZ, Psb30/Ycf12, at least 3 peripheral proteins of the oxygen-evolving complex and a large number of cofactors. It forms dimeric complexes.</text>
</comment>
<comment type="subcellular location">
    <subcellularLocation>
        <location evidence="1">Plastid</location>
        <location evidence="1">Chloroplast thylakoid membrane</location>
        <topology evidence="1">Multi-pass membrane protein</topology>
    </subcellularLocation>
</comment>
<comment type="PTM">
    <text evidence="1">Tyr-162 forms a radical intermediate that is referred to as redox-active TyrZ, YZ or Y-Z.</text>
</comment>
<comment type="miscellaneous">
    <text evidence="1">2 of the reaction center chlorophylls (ChlD1 and ChlD2) are entirely coordinated by water.</text>
</comment>
<comment type="miscellaneous">
    <text evidence="1">Herbicides such as atrazine, BNT, diuron or ioxynil bind in the Q(B) binding site and block subsequent electron transfer.</text>
</comment>
<comment type="similarity">
    <text evidence="1">Belongs to the reaction center PufL/M/PsbA/D family.</text>
</comment>
<geneLocation type="chloroplast"/>
<name>PSBA_EUGGR</name>
<proteinExistence type="evidence at protein level"/>
<keyword id="KW-0106">Calcium</keyword>
<keyword id="KW-0148">Chlorophyll</keyword>
<keyword id="KW-0150">Chloroplast</keyword>
<keyword id="KW-0157">Chromophore</keyword>
<keyword id="KW-0249">Electron transport</keyword>
<keyword id="KW-0359">Herbicide resistance</keyword>
<keyword id="KW-0408">Iron</keyword>
<keyword id="KW-0460">Magnesium</keyword>
<keyword id="KW-0464">Manganese</keyword>
<keyword id="KW-0472">Membrane</keyword>
<keyword id="KW-0479">Metal-binding</keyword>
<keyword id="KW-0560">Oxidoreductase</keyword>
<keyword id="KW-0602">Photosynthesis</keyword>
<keyword id="KW-0604">Photosystem II</keyword>
<keyword id="KW-0934">Plastid</keyword>
<keyword id="KW-0793">Thylakoid</keyword>
<keyword id="KW-0812">Transmembrane</keyword>
<keyword id="KW-1133">Transmembrane helix</keyword>
<keyword id="KW-0813">Transport</keyword>
<protein>
    <recommendedName>
        <fullName evidence="1">Photosystem II protein D1</fullName>
        <shortName evidence="1">PSII D1 protein</shortName>
        <ecNumber evidence="1">1.10.3.9</ecNumber>
    </recommendedName>
    <alternativeName>
        <fullName evidence="3">32 kDa thylakoid membrane protein</fullName>
    </alternativeName>
    <alternativeName>
        <fullName evidence="1">Photosystem II Q(B) protein</fullName>
    </alternativeName>
</protein>
<evidence type="ECO:0000255" key="1">
    <source>
        <dbReference type="HAMAP-Rule" id="MF_01379"/>
    </source>
</evidence>
<evidence type="ECO:0000269" key="2">
    <source>
    </source>
</evidence>
<evidence type="ECO:0000303" key="3">
    <source>
    </source>
</evidence>
<evidence type="ECO:0000305" key="4"/>
<feature type="chain" id="PRO_0000090440" description="Photosystem II protein D1" evidence="1">
    <location>
        <begin position="1"/>
        <end position="345"/>
    </location>
</feature>
<feature type="transmembrane region" description="Helical" evidence="1">
    <location>
        <begin position="30"/>
        <end position="47"/>
    </location>
</feature>
<feature type="transmembrane region" description="Helical" evidence="1">
    <location>
        <begin position="119"/>
        <end position="134"/>
    </location>
</feature>
<feature type="transmembrane region" description="Helical" evidence="1">
    <location>
        <begin position="143"/>
        <end position="157"/>
    </location>
</feature>
<feature type="transmembrane region" description="Helical" evidence="1">
    <location>
        <begin position="198"/>
        <end position="219"/>
    </location>
</feature>
<feature type="transmembrane region" description="Helical" evidence="1">
    <location>
        <begin position="275"/>
        <end position="289"/>
    </location>
</feature>
<feature type="binding site" description="axial binding residue" evidence="1">
    <location>
        <position position="119"/>
    </location>
    <ligand>
        <name>chlorophyll a</name>
        <dbReference type="ChEBI" id="CHEBI:58416"/>
        <label>ChlzD1</label>
    </ligand>
    <ligandPart>
        <name>Mg</name>
        <dbReference type="ChEBI" id="CHEBI:25107"/>
    </ligandPart>
</feature>
<feature type="binding site" evidence="1">
    <location>
        <position position="127"/>
    </location>
    <ligand>
        <name>pheophytin a</name>
        <dbReference type="ChEBI" id="CHEBI:136840"/>
        <label>D1</label>
    </ligand>
</feature>
<feature type="binding site" evidence="1">
    <location>
        <position position="171"/>
    </location>
    <ligand>
        <name>[CaMn4O5] cluster</name>
        <dbReference type="ChEBI" id="CHEBI:189552"/>
    </ligand>
</feature>
<feature type="binding site" evidence="1">
    <location>
        <position position="190"/>
    </location>
    <ligand>
        <name>[CaMn4O5] cluster</name>
        <dbReference type="ChEBI" id="CHEBI:189552"/>
    </ligand>
</feature>
<feature type="binding site" description="axial binding residue" evidence="1">
    <location>
        <position position="199"/>
    </location>
    <ligand>
        <name>chlorophyll a</name>
        <dbReference type="ChEBI" id="CHEBI:58416"/>
        <label>PD1</label>
    </ligand>
    <ligandPart>
        <name>Mg</name>
        <dbReference type="ChEBI" id="CHEBI:25107"/>
    </ligandPart>
</feature>
<feature type="binding site" evidence="1">
    <location>
        <position position="216"/>
    </location>
    <ligand>
        <name>a quinone</name>
        <dbReference type="ChEBI" id="CHEBI:132124"/>
        <label>B</label>
    </ligand>
</feature>
<feature type="binding site" evidence="1">
    <location>
        <position position="216"/>
    </location>
    <ligand>
        <name>Fe cation</name>
        <dbReference type="ChEBI" id="CHEBI:24875"/>
        <note>ligand shared with heterodimeric partner</note>
    </ligand>
</feature>
<feature type="binding site" evidence="1">
    <location>
        <begin position="265"/>
        <end position="266"/>
    </location>
    <ligand>
        <name>a quinone</name>
        <dbReference type="ChEBI" id="CHEBI:132124"/>
        <label>B</label>
    </ligand>
</feature>
<feature type="binding site" evidence="1">
    <location>
        <position position="273"/>
    </location>
    <ligand>
        <name>Fe cation</name>
        <dbReference type="ChEBI" id="CHEBI:24875"/>
        <note>ligand shared with heterodimeric partner</note>
    </ligand>
</feature>
<feature type="binding site" evidence="1">
    <location>
        <position position="333"/>
    </location>
    <ligand>
        <name>[CaMn4O5] cluster</name>
        <dbReference type="ChEBI" id="CHEBI:189552"/>
    </ligand>
</feature>
<feature type="binding site" evidence="1">
    <location>
        <position position="334"/>
    </location>
    <ligand>
        <name>[CaMn4O5] cluster</name>
        <dbReference type="ChEBI" id="CHEBI:189552"/>
    </ligand>
</feature>
<feature type="binding site" evidence="1">
    <location>
        <position position="343"/>
    </location>
    <ligand>
        <name>[CaMn4O5] cluster</name>
        <dbReference type="ChEBI" id="CHEBI:189552"/>
    </ligand>
</feature>
<feature type="binding site" evidence="1">
    <location>
        <position position="345"/>
    </location>
    <ligand>
        <name>[CaMn4O5] cluster</name>
        <dbReference type="ChEBI" id="CHEBI:189552"/>
    </ligand>
</feature>
<feature type="site" description="Tyrosine radical intermediate" evidence="1">
    <location>
        <position position="162"/>
    </location>
</feature>
<feature type="site" description="Stabilizes free radical intermediate" evidence="1">
    <location>
        <position position="191"/>
    </location>
</feature>
<feature type="mutagenesis site" description="Herbicide resistance." evidence="2">
    <original>S</original>
    <variation>A</variation>
    <location>
        <position position="265"/>
    </location>
</feature>
<feature type="sequence conflict" description="In Ref. 1; CAA25447." evidence="4" ref="1">
    <original>I</original>
    <variation>L</variation>
    <location>
        <position position="79"/>
    </location>
</feature>
<dbReference type="EC" id="1.10.3.9" evidence="1"/>
<dbReference type="EMBL" id="Z11874">
    <property type="status" value="NOT_ANNOTATED_CDS"/>
    <property type="molecule type" value="Genomic_DNA"/>
</dbReference>
<dbReference type="EMBL" id="X00929">
    <property type="protein sequence ID" value="CAA25447.1"/>
    <property type="molecule type" value="Genomic_DNA"/>
</dbReference>
<dbReference type="EMBL" id="X00735">
    <property type="protein sequence ID" value="CAA25319.1"/>
    <property type="molecule type" value="Genomic_DNA"/>
</dbReference>
<dbReference type="EMBL" id="X70810">
    <property type="protein sequence ID" value="CAA50082.1"/>
    <property type="molecule type" value="Genomic_DNA"/>
</dbReference>
<dbReference type="PIR" id="A22883">
    <property type="entry name" value="S34503"/>
</dbReference>
<dbReference type="RefSeq" id="NP_041895.1">
    <property type="nucleotide sequence ID" value="NC_001603.2"/>
</dbReference>
<dbReference type="SMR" id="P06631"/>
<dbReference type="GeneID" id="807514"/>
<dbReference type="GO" id="GO:0009535">
    <property type="term" value="C:chloroplast thylakoid membrane"/>
    <property type="evidence" value="ECO:0007669"/>
    <property type="project" value="UniProtKB-SubCell"/>
</dbReference>
<dbReference type="GO" id="GO:0009523">
    <property type="term" value="C:photosystem II"/>
    <property type="evidence" value="ECO:0007669"/>
    <property type="project" value="UniProtKB-KW"/>
</dbReference>
<dbReference type="GO" id="GO:0016168">
    <property type="term" value="F:chlorophyll binding"/>
    <property type="evidence" value="ECO:0007669"/>
    <property type="project" value="UniProtKB-UniRule"/>
</dbReference>
<dbReference type="GO" id="GO:0045156">
    <property type="term" value="F:electron transporter, transferring electrons within the cyclic electron transport pathway of photosynthesis activity"/>
    <property type="evidence" value="ECO:0007669"/>
    <property type="project" value="InterPro"/>
</dbReference>
<dbReference type="GO" id="GO:0005506">
    <property type="term" value="F:iron ion binding"/>
    <property type="evidence" value="ECO:0007669"/>
    <property type="project" value="UniProtKB-UniRule"/>
</dbReference>
<dbReference type="GO" id="GO:0016682">
    <property type="term" value="F:oxidoreductase activity, acting on diphenols and related substances as donors, oxygen as acceptor"/>
    <property type="evidence" value="ECO:0007669"/>
    <property type="project" value="UniProtKB-UniRule"/>
</dbReference>
<dbReference type="GO" id="GO:0010242">
    <property type="term" value="F:oxygen evolving activity"/>
    <property type="evidence" value="ECO:0007669"/>
    <property type="project" value="UniProtKB-EC"/>
</dbReference>
<dbReference type="GO" id="GO:0009772">
    <property type="term" value="P:photosynthetic electron transport in photosystem II"/>
    <property type="evidence" value="ECO:0007669"/>
    <property type="project" value="InterPro"/>
</dbReference>
<dbReference type="GO" id="GO:0009635">
    <property type="term" value="P:response to herbicide"/>
    <property type="evidence" value="ECO:0007669"/>
    <property type="project" value="UniProtKB-KW"/>
</dbReference>
<dbReference type="CDD" id="cd09289">
    <property type="entry name" value="Photosystem-II_D1"/>
    <property type="match status" value="1"/>
</dbReference>
<dbReference type="FunFam" id="1.20.85.10:FF:000002">
    <property type="entry name" value="Photosystem II protein D1"/>
    <property type="match status" value="1"/>
</dbReference>
<dbReference type="Gene3D" id="1.20.85.10">
    <property type="entry name" value="Photosystem II protein D1-like"/>
    <property type="match status" value="1"/>
</dbReference>
<dbReference type="HAMAP" id="MF_01379">
    <property type="entry name" value="PSII_PsbA_D1"/>
    <property type="match status" value="1"/>
</dbReference>
<dbReference type="InterPro" id="IPR055266">
    <property type="entry name" value="D1/D2"/>
</dbReference>
<dbReference type="InterPro" id="IPR036854">
    <property type="entry name" value="Photo_II_D1/D2_sf"/>
</dbReference>
<dbReference type="InterPro" id="IPR000484">
    <property type="entry name" value="Photo_RC_L/M"/>
</dbReference>
<dbReference type="InterPro" id="IPR055265">
    <property type="entry name" value="Photo_RC_L/M_CS"/>
</dbReference>
<dbReference type="InterPro" id="IPR005867">
    <property type="entry name" value="PSII_D1"/>
</dbReference>
<dbReference type="NCBIfam" id="TIGR01151">
    <property type="entry name" value="psbA"/>
    <property type="match status" value="1"/>
</dbReference>
<dbReference type="PANTHER" id="PTHR33149:SF12">
    <property type="entry name" value="PHOTOSYSTEM II D2 PROTEIN"/>
    <property type="match status" value="1"/>
</dbReference>
<dbReference type="PANTHER" id="PTHR33149">
    <property type="entry name" value="PHOTOSYSTEM II PROTEIN D1"/>
    <property type="match status" value="1"/>
</dbReference>
<dbReference type="Pfam" id="PF00124">
    <property type="entry name" value="Photo_RC"/>
    <property type="match status" value="1"/>
</dbReference>
<dbReference type="PRINTS" id="PR00256">
    <property type="entry name" value="REACTNCENTRE"/>
</dbReference>
<dbReference type="SUPFAM" id="SSF81483">
    <property type="entry name" value="Bacterial photosystem II reaction centre, L and M subunits"/>
    <property type="match status" value="1"/>
</dbReference>
<dbReference type="PROSITE" id="PS00244">
    <property type="entry name" value="REACTION_CENTER"/>
    <property type="match status" value="1"/>
</dbReference>